<keyword id="KW-0004">4Fe-4S</keyword>
<keyword id="KW-0963">Cytoplasm</keyword>
<keyword id="KW-0408">Iron</keyword>
<keyword id="KW-0411">Iron-sulfur</keyword>
<keyword id="KW-0479">Metal-binding</keyword>
<keyword id="KW-0949">S-adenosyl-L-methionine</keyword>
<keyword id="KW-0808">Transferase</keyword>
<keyword id="KW-0819">tRNA processing</keyword>
<gene>
    <name evidence="1" type="primary">miaB</name>
    <name type="ordered locus">A1G_06820</name>
</gene>
<accession>A8GTT8</accession>
<dbReference type="EC" id="2.8.4.3" evidence="1"/>
<dbReference type="EMBL" id="CP000848">
    <property type="protein sequence ID" value="ABV76813.1"/>
    <property type="molecule type" value="Genomic_DNA"/>
</dbReference>
<dbReference type="RefSeq" id="WP_012151355.1">
    <property type="nucleotide sequence ID" value="NZ_CP121767.1"/>
</dbReference>
<dbReference type="SMR" id="A8GTT8"/>
<dbReference type="GeneID" id="79937854"/>
<dbReference type="KEGG" id="rri:A1G_06820"/>
<dbReference type="HOGENOM" id="CLU_018697_2_2_5"/>
<dbReference type="Proteomes" id="UP000006832">
    <property type="component" value="Chromosome"/>
</dbReference>
<dbReference type="GO" id="GO:0005829">
    <property type="term" value="C:cytosol"/>
    <property type="evidence" value="ECO:0007669"/>
    <property type="project" value="TreeGrafter"/>
</dbReference>
<dbReference type="GO" id="GO:0051539">
    <property type="term" value="F:4 iron, 4 sulfur cluster binding"/>
    <property type="evidence" value="ECO:0007669"/>
    <property type="project" value="UniProtKB-UniRule"/>
</dbReference>
<dbReference type="GO" id="GO:0046872">
    <property type="term" value="F:metal ion binding"/>
    <property type="evidence" value="ECO:0007669"/>
    <property type="project" value="UniProtKB-KW"/>
</dbReference>
<dbReference type="GO" id="GO:0035597">
    <property type="term" value="F:N6-isopentenyladenosine methylthiotransferase activity"/>
    <property type="evidence" value="ECO:0007669"/>
    <property type="project" value="TreeGrafter"/>
</dbReference>
<dbReference type="CDD" id="cd01335">
    <property type="entry name" value="Radical_SAM"/>
    <property type="match status" value="1"/>
</dbReference>
<dbReference type="FunFam" id="3.40.50.12160:FF:000001">
    <property type="entry name" value="tRNA-2-methylthio-N(6)-dimethylallyladenosine synthase"/>
    <property type="match status" value="1"/>
</dbReference>
<dbReference type="FunFam" id="3.80.30.20:FF:000001">
    <property type="entry name" value="tRNA-2-methylthio-N(6)-dimethylallyladenosine synthase 2"/>
    <property type="match status" value="1"/>
</dbReference>
<dbReference type="Gene3D" id="3.40.50.12160">
    <property type="entry name" value="Methylthiotransferase, N-terminal domain"/>
    <property type="match status" value="1"/>
</dbReference>
<dbReference type="Gene3D" id="3.80.30.20">
    <property type="entry name" value="tm_1862 like domain"/>
    <property type="match status" value="1"/>
</dbReference>
<dbReference type="HAMAP" id="MF_01864">
    <property type="entry name" value="tRNA_metthiotr_MiaB"/>
    <property type="match status" value="1"/>
</dbReference>
<dbReference type="InterPro" id="IPR006638">
    <property type="entry name" value="Elp3/MiaA/NifB-like_rSAM"/>
</dbReference>
<dbReference type="InterPro" id="IPR005839">
    <property type="entry name" value="Methylthiotransferase"/>
</dbReference>
<dbReference type="InterPro" id="IPR020612">
    <property type="entry name" value="Methylthiotransferase_CS"/>
</dbReference>
<dbReference type="InterPro" id="IPR013848">
    <property type="entry name" value="Methylthiotransferase_N"/>
</dbReference>
<dbReference type="InterPro" id="IPR038135">
    <property type="entry name" value="Methylthiotransferase_N_sf"/>
</dbReference>
<dbReference type="InterPro" id="IPR006463">
    <property type="entry name" value="MiaB_methiolase"/>
</dbReference>
<dbReference type="InterPro" id="IPR007197">
    <property type="entry name" value="rSAM"/>
</dbReference>
<dbReference type="InterPro" id="IPR023404">
    <property type="entry name" value="rSAM_horseshoe"/>
</dbReference>
<dbReference type="InterPro" id="IPR002792">
    <property type="entry name" value="TRAM_dom"/>
</dbReference>
<dbReference type="NCBIfam" id="TIGR01574">
    <property type="entry name" value="miaB-methiolase"/>
    <property type="match status" value="1"/>
</dbReference>
<dbReference type="NCBIfam" id="TIGR00089">
    <property type="entry name" value="MiaB/RimO family radical SAM methylthiotransferase"/>
    <property type="match status" value="1"/>
</dbReference>
<dbReference type="PANTHER" id="PTHR43020">
    <property type="entry name" value="CDK5 REGULATORY SUBUNIT-ASSOCIATED PROTEIN 1"/>
    <property type="match status" value="1"/>
</dbReference>
<dbReference type="PANTHER" id="PTHR43020:SF2">
    <property type="entry name" value="MITOCHONDRIAL TRNA METHYLTHIOTRANSFERASE CDK5RAP1"/>
    <property type="match status" value="1"/>
</dbReference>
<dbReference type="Pfam" id="PF04055">
    <property type="entry name" value="Radical_SAM"/>
    <property type="match status" value="1"/>
</dbReference>
<dbReference type="Pfam" id="PF01938">
    <property type="entry name" value="TRAM"/>
    <property type="match status" value="1"/>
</dbReference>
<dbReference type="Pfam" id="PF00919">
    <property type="entry name" value="UPF0004"/>
    <property type="match status" value="1"/>
</dbReference>
<dbReference type="SFLD" id="SFLDF00273">
    <property type="entry name" value="(dimethylallyl)adenosine_tRNA"/>
    <property type="match status" value="1"/>
</dbReference>
<dbReference type="SFLD" id="SFLDG01082">
    <property type="entry name" value="B12-binding_domain_containing"/>
    <property type="match status" value="1"/>
</dbReference>
<dbReference type="SFLD" id="SFLDS00029">
    <property type="entry name" value="Radical_SAM"/>
    <property type="match status" value="1"/>
</dbReference>
<dbReference type="SMART" id="SM00729">
    <property type="entry name" value="Elp3"/>
    <property type="match status" value="1"/>
</dbReference>
<dbReference type="SUPFAM" id="SSF102114">
    <property type="entry name" value="Radical SAM enzymes"/>
    <property type="match status" value="1"/>
</dbReference>
<dbReference type="PROSITE" id="PS51449">
    <property type="entry name" value="MTTASE_N"/>
    <property type="match status" value="1"/>
</dbReference>
<dbReference type="PROSITE" id="PS01278">
    <property type="entry name" value="MTTASE_RADICAL"/>
    <property type="match status" value="1"/>
</dbReference>
<dbReference type="PROSITE" id="PS51918">
    <property type="entry name" value="RADICAL_SAM"/>
    <property type="match status" value="1"/>
</dbReference>
<dbReference type="PROSITE" id="PS50926">
    <property type="entry name" value="TRAM"/>
    <property type="match status" value="1"/>
</dbReference>
<reference key="1">
    <citation type="submission" date="2007-09" db="EMBL/GenBank/DDBJ databases">
        <title>Complete genome sequence of Rickettsia rickettsii.</title>
        <authorList>
            <person name="Madan A."/>
            <person name="Fahey J."/>
            <person name="Helton E."/>
            <person name="Ketteman M."/>
            <person name="Madan A."/>
            <person name="Rodrigues S."/>
            <person name="Sanchez A."/>
            <person name="Dasch G."/>
            <person name="Eremeeva M."/>
        </authorList>
    </citation>
    <scope>NUCLEOTIDE SEQUENCE [LARGE SCALE GENOMIC DNA]</scope>
    <source>
        <strain>Sheila Smith</strain>
    </source>
</reference>
<evidence type="ECO:0000255" key="1">
    <source>
        <dbReference type="HAMAP-Rule" id="MF_01864"/>
    </source>
</evidence>
<evidence type="ECO:0000255" key="2">
    <source>
        <dbReference type="PROSITE-ProRule" id="PRU01266"/>
    </source>
</evidence>
<organism>
    <name type="scientific">Rickettsia rickettsii (strain Sheila Smith)</name>
    <dbReference type="NCBI Taxonomy" id="392021"/>
    <lineage>
        <taxon>Bacteria</taxon>
        <taxon>Pseudomonadati</taxon>
        <taxon>Pseudomonadota</taxon>
        <taxon>Alphaproteobacteria</taxon>
        <taxon>Rickettsiales</taxon>
        <taxon>Rickettsiaceae</taxon>
        <taxon>Rickettsieae</taxon>
        <taxon>Rickettsia</taxon>
        <taxon>spotted fever group</taxon>
    </lineage>
</organism>
<comment type="function">
    <text evidence="1">Catalyzes the methylthiolation of N6-(dimethylallyl)adenosine (i(6)A), leading to the formation of 2-methylthio-N6-(dimethylallyl)adenosine (ms(2)i(6)A) at position 37 in tRNAs that read codons beginning with uridine.</text>
</comment>
<comment type="catalytic activity">
    <reaction evidence="1">
        <text>N(6)-dimethylallyladenosine(37) in tRNA + (sulfur carrier)-SH + AH2 + 2 S-adenosyl-L-methionine = 2-methylsulfanyl-N(6)-dimethylallyladenosine(37) in tRNA + (sulfur carrier)-H + 5'-deoxyadenosine + L-methionine + A + S-adenosyl-L-homocysteine + 2 H(+)</text>
        <dbReference type="Rhea" id="RHEA:37067"/>
        <dbReference type="Rhea" id="RHEA-COMP:10375"/>
        <dbReference type="Rhea" id="RHEA-COMP:10376"/>
        <dbReference type="Rhea" id="RHEA-COMP:14737"/>
        <dbReference type="Rhea" id="RHEA-COMP:14739"/>
        <dbReference type="ChEBI" id="CHEBI:13193"/>
        <dbReference type="ChEBI" id="CHEBI:15378"/>
        <dbReference type="ChEBI" id="CHEBI:17319"/>
        <dbReference type="ChEBI" id="CHEBI:17499"/>
        <dbReference type="ChEBI" id="CHEBI:29917"/>
        <dbReference type="ChEBI" id="CHEBI:57844"/>
        <dbReference type="ChEBI" id="CHEBI:57856"/>
        <dbReference type="ChEBI" id="CHEBI:59789"/>
        <dbReference type="ChEBI" id="CHEBI:64428"/>
        <dbReference type="ChEBI" id="CHEBI:74415"/>
        <dbReference type="ChEBI" id="CHEBI:74417"/>
        <dbReference type="EC" id="2.8.4.3"/>
    </reaction>
</comment>
<comment type="cofactor">
    <cofactor evidence="1">
        <name>[4Fe-4S] cluster</name>
        <dbReference type="ChEBI" id="CHEBI:49883"/>
    </cofactor>
    <text evidence="1">Binds 2 [4Fe-4S] clusters. One cluster is coordinated with 3 cysteines and an exchangeable S-adenosyl-L-methionine.</text>
</comment>
<comment type="subunit">
    <text evidence="1">Monomer.</text>
</comment>
<comment type="subcellular location">
    <subcellularLocation>
        <location evidence="1">Cytoplasm</location>
    </subcellularLocation>
</comment>
<comment type="similarity">
    <text evidence="1">Belongs to the methylthiotransferase family. MiaB subfamily.</text>
</comment>
<proteinExistence type="inferred from homology"/>
<sequence>MSKKLYIKTYGCQMNVYDSIKMQDLLYPFGYEPTENIEEADVIILNTCHIREKAAEKTYSELGRIKKLQDTRTKQGLSSAIIVVAGCVAQAEGEEIFTRTPYVDIVVGPQSYYNLPELISKVVRHEKHLIDLDFVEEAKFDQLPEQLYPQGTSAFISVQEGCDKFCTFCVVPYTRGAEFSRNVEQVYREALKVVSSGAKEIMLLGQNVNAYHGKGPADKIFSLADLLKHLAQIPNLERLRYTTSHPIDMNNDLIKLYGTEPKLMPFLHLPVQSGSNKILKAMNRKHDREYYFDIINRLREARPDIVLSSDFIVGFPGETDEDFEDTLDLVRRVKYGQCYSFKYSPRPGTPGATRTDQIPEHIKSERLTILQQELMAQQLAFNTSCVGSTMKVLFDRNGKFDDQIIGKTPYMQSVYIQNPNKSLLGKIIDVKITKASLNSLTGEIL</sequence>
<protein>
    <recommendedName>
        <fullName evidence="1">tRNA-2-methylthio-N(6)-dimethylallyladenosine synthase</fullName>
        <ecNumber evidence="1">2.8.4.3</ecNumber>
    </recommendedName>
    <alternativeName>
        <fullName evidence="1">(Dimethylallyl)adenosine tRNA methylthiotransferase MiaB</fullName>
    </alternativeName>
    <alternativeName>
        <fullName evidence="1">tRNA-i(6)A37 methylthiotransferase</fullName>
    </alternativeName>
</protein>
<feature type="chain" id="PRO_0000374509" description="tRNA-2-methylthio-N(6)-dimethylallyladenosine synthase">
    <location>
        <begin position="1"/>
        <end position="445"/>
    </location>
</feature>
<feature type="domain" description="MTTase N-terminal" evidence="1">
    <location>
        <begin position="3"/>
        <end position="124"/>
    </location>
</feature>
<feature type="domain" description="Radical SAM core" evidence="2">
    <location>
        <begin position="148"/>
        <end position="380"/>
    </location>
</feature>
<feature type="domain" description="TRAM" evidence="1">
    <location>
        <begin position="383"/>
        <end position="445"/>
    </location>
</feature>
<feature type="binding site" evidence="1">
    <location>
        <position position="12"/>
    </location>
    <ligand>
        <name>[4Fe-4S] cluster</name>
        <dbReference type="ChEBI" id="CHEBI:49883"/>
        <label>1</label>
    </ligand>
</feature>
<feature type="binding site" evidence="1">
    <location>
        <position position="48"/>
    </location>
    <ligand>
        <name>[4Fe-4S] cluster</name>
        <dbReference type="ChEBI" id="CHEBI:49883"/>
        <label>1</label>
    </ligand>
</feature>
<feature type="binding site" evidence="1">
    <location>
        <position position="87"/>
    </location>
    <ligand>
        <name>[4Fe-4S] cluster</name>
        <dbReference type="ChEBI" id="CHEBI:49883"/>
        <label>1</label>
    </ligand>
</feature>
<feature type="binding site" evidence="1">
    <location>
        <position position="162"/>
    </location>
    <ligand>
        <name>[4Fe-4S] cluster</name>
        <dbReference type="ChEBI" id="CHEBI:49883"/>
        <label>2</label>
        <note>4Fe-4S-S-AdoMet</note>
    </ligand>
</feature>
<feature type="binding site" evidence="1">
    <location>
        <position position="166"/>
    </location>
    <ligand>
        <name>[4Fe-4S] cluster</name>
        <dbReference type="ChEBI" id="CHEBI:49883"/>
        <label>2</label>
        <note>4Fe-4S-S-AdoMet</note>
    </ligand>
</feature>
<feature type="binding site" evidence="1">
    <location>
        <position position="169"/>
    </location>
    <ligand>
        <name>[4Fe-4S] cluster</name>
        <dbReference type="ChEBI" id="CHEBI:49883"/>
        <label>2</label>
        <note>4Fe-4S-S-AdoMet</note>
    </ligand>
</feature>
<name>MIAB_RICRS</name>